<keyword id="KW-0001">2Fe-2S</keyword>
<keyword id="KW-0963">Cytoplasm</keyword>
<keyword id="KW-0408">Iron</keyword>
<keyword id="KW-0411">Iron-sulfur</keyword>
<keyword id="KW-0479">Metal-binding</keyword>
<keyword id="KW-0663">Pyridoxal phosphate</keyword>
<keyword id="KW-0808">Transferase</keyword>
<organism>
    <name type="scientific">Rickettsia massiliae (strain Mtu5)</name>
    <dbReference type="NCBI Taxonomy" id="416276"/>
    <lineage>
        <taxon>Bacteria</taxon>
        <taxon>Pseudomonadati</taxon>
        <taxon>Pseudomonadota</taxon>
        <taxon>Alphaproteobacteria</taxon>
        <taxon>Rickettsiales</taxon>
        <taxon>Rickettsiaceae</taxon>
        <taxon>Rickettsieae</taxon>
        <taxon>Rickettsia</taxon>
        <taxon>spotted fever group</taxon>
    </lineage>
</organism>
<proteinExistence type="inferred from homology"/>
<evidence type="ECO:0000255" key="1">
    <source>
        <dbReference type="HAMAP-Rule" id="MF_00331"/>
    </source>
</evidence>
<protein>
    <recommendedName>
        <fullName evidence="1">Cysteine desulfurase IscS</fullName>
        <ecNumber evidence="1">2.8.1.7</ecNumber>
    </recommendedName>
</protein>
<comment type="function">
    <text evidence="1">Master enzyme that delivers sulfur to a number of partners involved in Fe-S cluster assembly, tRNA modification or cofactor biosynthesis. Catalyzes the removal of elemental sulfur atoms from cysteine to produce alanine. Functions as a sulfur delivery protein for Fe-S cluster synthesis onto IscU, an Fe-S scaffold assembly protein, as well as other S acceptor proteins.</text>
</comment>
<comment type="catalytic activity">
    <reaction evidence="1">
        <text>(sulfur carrier)-H + L-cysteine = (sulfur carrier)-SH + L-alanine</text>
        <dbReference type="Rhea" id="RHEA:43892"/>
        <dbReference type="Rhea" id="RHEA-COMP:14737"/>
        <dbReference type="Rhea" id="RHEA-COMP:14739"/>
        <dbReference type="ChEBI" id="CHEBI:29917"/>
        <dbReference type="ChEBI" id="CHEBI:35235"/>
        <dbReference type="ChEBI" id="CHEBI:57972"/>
        <dbReference type="ChEBI" id="CHEBI:64428"/>
        <dbReference type="EC" id="2.8.1.7"/>
    </reaction>
</comment>
<comment type="cofactor">
    <cofactor evidence="1">
        <name>pyridoxal 5'-phosphate</name>
        <dbReference type="ChEBI" id="CHEBI:597326"/>
    </cofactor>
</comment>
<comment type="pathway">
    <text evidence="1">Cofactor biosynthesis; iron-sulfur cluster biosynthesis.</text>
</comment>
<comment type="subunit">
    <text evidence="1">Homodimer. Forms a heterotetramer with IscU, interacts with other sulfur acceptors.</text>
</comment>
<comment type="subcellular location">
    <subcellularLocation>
        <location evidence="1">Cytoplasm</location>
    </subcellularLocation>
</comment>
<comment type="similarity">
    <text evidence="1">Belongs to the class-V pyridoxal-phosphate-dependent aminotransferase family. NifS/IscS subfamily.</text>
</comment>
<dbReference type="EC" id="2.8.1.7" evidence="1"/>
<dbReference type="EMBL" id="CP000683">
    <property type="protein sequence ID" value="ABV84940.1"/>
    <property type="molecule type" value="Genomic_DNA"/>
</dbReference>
<dbReference type="RefSeq" id="WP_012152913.1">
    <property type="nucleotide sequence ID" value="NC_009900.1"/>
</dbReference>
<dbReference type="SMR" id="A8F204"/>
<dbReference type="KEGG" id="rms:RMA_0823"/>
<dbReference type="HOGENOM" id="CLU_003433_0_2_5"/>
<dbReference type="UniPathway" id="UPA00266"/>
<dbReference type="Proteomes" id="UP000001311">
    <property type="component" value="Chromosome"/>
</dbReference>
<dbReference type="GO" id="GO:1990221">
    <property type="term" value="C:L-cysteine desulfurase complex"/>
    <property type="evidence" value="ECO:0007669"/>
    <property type="project" value="UniProtKB-ARBA"/>
</dbReference>
<dbReference type="GO" id="GO:0051537">
    <property type="term" value="F:2 iron, 2 sulfur cluster binding"/>
    <property type="evidence" value="ECO:0007669"/>
    <property type="project" value="UniProtKB-UniRule"/>
</dbReference>
<dbReference type="GO" id="GO:0031071">
    <property type="term" value="F:cysteine desulfurase activity"/>
    <property type="evidence" value="ECO:0007669"/>
    <property type="project" value="UniProtKB-UniRule"/>
</dbReference>
<dbReference type="GO" id="GO:0046872">
    <property type="term" value="F:metal ion binding"/>
    <property type="evidence" value="ECO:0007669"/>
    <property type="project" value="UniProtKB-KW"/>
</dbReference>
<dbReference type="GO" id="GO:0030170">
    <property type="term" value="F:pyridoxal phosphate binding"/>
    <property type="evidence" value="ECO:0007669"/>
    <property type="project" value="UniProtKB-UniRule"/>
</dbReference>
<dbReference type="GO" id="GO:0044571">
    <property type="term" value="P:[2Fe-2S] cluster assembly"/>
    <property type="evidence" value="ECO:0007669"/>
    <property type="project" value="UniProtKB-UniRule"/>
</dbReference>
<dbReference type="FunFam" id="3.40.640.10:FF:000003">
    <property type="entry name" value="Cysteine desulfurase IscS"/>
    <property type="match status" value="1"/>
</dbReference>
<dbReference type="FunFam" id="3.90.1150.10:FF:000002">
    <property type="entry name" value="Cysteine desulfurase IscS"/>
    <property type="match status" value="1"/>
</dbReference>
<dbReference type="Gene3D" id="3.90.1150.10">
    <property type="entry name" value="Aspartate Aminotransferase, domain 1"/>
    <property type="match status" value="1"/>
</dbReference>
<dbReference type="Gene3D" id="3.40.640.10">
    <property type="entry name" value="Type I PLP-dependent aspartate aminotransferase-like (Major domain)"/>
    <property type="match status" value="1"/>
</dbReference>
<dbReference type="HAMAP" id="MF_00331">
    <property type="entry name" value="Cys_desulf_IscS"/>
    <property type="match status" value="1"/>
</dbReference>
<dbReference type="InterPro" id="IPR000192">
    <property type="entry name" value="Aminotrans_V_dom"/>
</dbReference>
<dbReference type="InterPro" id="IPR020578">
    <property type="entry name" value="Aminotrans_V_PyrdxlP_BS"/>
</dbReference>
<dbReference type="InterPro" id="IPR010240">
    <property type="entry name" value="Cys_deSase_IscS"/>
</dbReference>
<dbReference type="InterPro" id="IPR016454">
    <property type="entry name" value="Cysteine_dSase"/>
</dbReference>
<dbReference type="InterPro" id="IPR015424">
    <property type="entry name" value="PyrdxlP-dep_Trfase"/>
</dbReference>
<dbReference type="InterPro" id="IPR015421">
    <property type="entry name" value="PyrdxlP-dep_Trfase_major"/>
</dbReference>
<dbReference type="InterPro" id="IPR015422">
    <property type="entry name" value="PyrdxlP-dep_Trfase_small"/>
</dbReference>
<dbReference type="NCBIfam" id="TIGR02006">
    <property type="entry name" value="IscS"/>
    <property type="match status" value="1"/>
</dbReference>
<dbReference type="NCBIfam" id="NF002806">
    <property type="entry name" value="PRK02948.1"/>
    <property type="match status" value="1"/>
</dbReference>
<dbReference type="NCBIfam" id="NF010611">
    <property type="entry name" value="PRK14012.1"/>
    <property type="match status" value="1"/>
</dbReference>
<dbReference type="PANTHER" id="PTHR11601:SF34">
    <property type="entry name" value="CYSTEINE DESULFURASE"/>
    <property type="match status" value="1"/>
</dbReference>
<dbReference type="PANTHER" id="PTHR11601">
    <property type="entry name" value="CYSTEINE DESULFURYLASE FAMILY MEMBER"/>
    <property type="match status" value="1"/>
</dbReference>
<dbReference type="Pfam" id="PF00266">
    <property type="entry name" value="Aminotran_5"/>
    <property type="match status" value="1"/>
</dbReference>
<dbReference type="PIRSF" id="PIRSF005572">
    <property type="entry name" value="NifS"/>
    <property type="match status" value="1"/>
</dbReference>
<dbReference type="SUPFAM" id="SSF53383">
    <property type="entry name" value="PLP-dependent transferases"/>
    <property type="match status" value="1"/>
</dbReference>
<dbReference type="PROSITE" id="PS00595">
    <property type="entry name" value="AA_TRANSFER_CLASS_5"/>
    <property type="match status" value="1"/>
</dbReference>
<reference key="1">
    <citation type="journal article" date="2007" name="Genome Res.">
        <title>Lateral gene transfer between obligate intracellular bacteria: evidence from the Rickettsia massiliae genome.</title>
        <authorList>
            <person name="Blanc G."/>
            <person name="Ogata H."/>
            <person name="Robert C."/>
            <person name="Audic S."/>
            <person name="Claverie J.-M."/>
            <person name="Raoult D."/>
        </authorList>
    </citation>
    <scope>NUCLEOTIDE SEQUENCE [LARGE SCALE GENOMIC DNA]</scope>
    <source>
        <strain>Mtu5</strain>
    </source>
</reference>
<feature type="chain" id="PRO_1000059493" description="Cysteine desulfurase IscS">
    <location>
        <begin position="1"/>
        <end position="410"/>
    </location>
</feature>
<feature type="active site" description="Cysteine persulfide intermediate" evidence="1">
    <location>
        <position position="334"/>
    </location>
</feature>
<feature type="binding site" evidence="1">
    <location>
        <begin position="80"/>
        <end position="81"/>
    </location>
    <ligand>
        <name>pyridoxal 5'-phosphate</name>
        <dbReference type="ChEBI" id="CHEBI:597326"/>
    </ligand>
</feature>
<feature type="binding site" evidence="1">
    <location>
        <position position="160"/>
    </location>
    <ligand>
        <name>pyridoxal 5'-phosphate</name>
        <dbReference type="ChEBI" id="CHEBI:597326"/>
    </ligand>
</feature>
<feature type="binding site" evidence="1">
    <location>
        <position position="188"/>
    </location>
    <ligand>
        <name>pyridoxal 5'-phosphate</name>
        <dbReference type="ChEBI" id="CHEBI:597326"/>
    </ligand>
</feature>
<feature type="binding site" evidence="1">
    <location>
        <begin position="208"/>
        <end position="210"/>
    </location>
    <ligand>
        <name>pyridoxal 5'-phosphate</name>
        <dbReference type="ChEBI" id="CHEBI:597326"/>
    </ligand>
</feature>
<feature type="binding site" evidence="1">
    <location>
        <position position="248"/>
    </location>
    <ligand>
        <name>pyridoxal 5'-phosphate</name>
        <dbReference type="ChEBI" id="CHEBI:597326"/>
    </ligand>
</feature>
<feature type="binding site" description="via persulfide group" evidence="1">
    <location>
        <position position="334"/>
    </location>
    <ligand>
        <name>[2Fe-2S] cluster</name>
        <dbReference type="ChEBI" id="CHEBI:190135"/>
        <note>ligand shared with IscU</note>
    </ligand>
</feature>
<feature type="modified residue" description="N6-(pyridoxal phosphate)lysine" evidence="1">
    <location>
        <position position="211"/>
    </location>
</feature>
<name>ISCS_RICM5</name>
<gene>
    <name evidence="1" type="primary">iscS</name>
    <name type="ordered locus">RMA_0823</name>
</gene>
<sequence length="410" mass="45515">MNPQLNKLTLPIYMDYQATTPIDPRVMEAMLPYFTTKFGNPHSRSHSFGWEAENAVEEARSMVAKLIGADTKEIIFTSGATESNNLAIKGIAKFYSNKKNHIITVVSEHKCVLDACRHLEQEGIKITYLPIKPNGIIDLETLKNAITDQTMLVSVMVVNNEIGVVQPLKEIGKICREKGVFFHSDIAQGFGKIPIDVNEFNIDLASISGHKIYGPKGIGALYVRKKPRVRVTPLINGGGQERGMRSGTLPTPLIVGLGMAAEIAYSEMEKDTKHVNYLFDRFLNNIHKRISEVYLNGDKNQRYKGNVNLSFAGVEGESIILAIKDLAVSSGSACTSASLEPSYVLRSMGIGEELAHTAIRFGIGRFTTEQEVDYAVNLICSKIDKLRELSPLWEMMQEGIDLKKIKWAVH</sequence>
<accession>A8F204</accession>